<feature type="chain" id="PRO_1000200887" description="Peptidase T">
    <location>
        <begin position="1"/>
        <end position="408"/>
    </location>
</feature>
<feature type="active site" evidence="1">
    <location>
        <position position="80"/>
    </location>
</feature>
<feature type="active site" description="Proton acceptor" evidence="1">
    <location>
        <position position="173"/>
    </location>
</feature>
<feature type="binding site" evidence="1">
    <location>
        <position position="78"/>
    </location>
    <ligand>
        <name>Zn(2+)</name>
        <dbReference type="ChEBI" id="CHEBI:29105"/>
        <label>1</label>
    </ligand>
</feature>
<feature type="binding site" evidence="1">
    <location>
        <position position="140"/>
    </location>
    <ligand>
        <name>Zn(2+)</name>
        <dbReference type="ChEBI" id="CHEBI:29105"/>
        <label>1</label>
    </ligand>
</feature>
<feature type="binding site" evidence="1">
    <location>
        <position position="140"/>
    </location>
    <ligand>
        <name>Zn(2+)</name>
        <dbReference type="ChEBI" id="CHEBI:29105"/>
        <label>2</label>
    </ligand>
</feature>
<feature type="binding site" evidence="1">
    <location>
        <position position="174"/>
    </location>
    <ligand>
        <name>Zn(2+)</name>
        <dbReference type="ChEBI" id="CHEBI:29105"/>
        <label>2</label>
    </ligand>
</feature>
<feature type="binding site" evidence="1">
    <location>
        <position position="196"/>
    </location>
    <ligand>
        <name>Zn(2+)</name>
        <dbReference type="ChEBI" id="CHEBI:29105"/>
        <label>1</label>
    </ligand>
</feature>
<feature type="binding site" evidence="1">
    <location>
        <position position="379"/>
    </location>
    <ligand>
        <name>Zn(2+)</name>
        <dbReference type="ChEBI" id="CHEBI:29105"/>
        <label>2</label>
    </ligand>
</feature>
<organism>
    <name type="scientific">Escherichia coli O127:H6 (strain E2348/69 / EPEC)</name>
    <dbReference type="NCBI Taxonomy" id="574521"/>
    <lineage>
        <taxon>Bacteria</taxon>
        <taxon>Pseudomonadati</taxon>
        <taxon>Pseudomonadota</taxon>
        <taxon>Gammaproteobacteria</taxon>
        <taxon>Enterobacterales</taxon>
        <taxon>Enterobacteriaceae</taxon>
        <taxon>Escherichia</taxon>
    </lineage>
</organism>
<dbReference type="EC" id="3.4.11.4" evidence="1"/>
<dbReference type="EMBL" id="FM180568">
    <property type="protein sequence ID" value="CAS08816.1"/>
    <property type="molecule type" value="Genomic_DNA"/>
</dbReference>
<dbReference type="RefSeq" id="WP_000359446.1">
    <property type="nucleotide sequence ID" value="NC_011601.1"/>
</dbReference>
<dbReference type="SMR" id="B7UQ36"/>
<dbReference type="MEROPS" id="M20.003"/>
<dbReference type="GeneID" id="93776283"/>
<dbReference type="KEGG" id="ecg:E2348C_1268"/>
<dbReference type="HOGENOM" id="CLU_053676_0_0_6"/>
<dbReference type="Proteomes" id="UP000008205">
    <property type="component" value="Chromosome"/>
</dbReference>
<dbReference type="GO" id="GO:0005829">
    <property type="term" value="C:cytosol"/>
    <property type="evidence" value="ECO:0007669"/>
    <property type="project" value="TreeGrafter"/>
</dbReference>
<dbReference type="GO" id="GO:0008237">
    <property type="term" value="F:metallopeptidase activity"/>
    <property type="evidence" value="ECO:0007669"/>
    <property type="project" value="UniProtKB-KW"/>
</dbReference>
<dbReference type="GO" id="GO:0045148">
    <property type="term" value="F:tripeptide aminopeptidase activity"/>
    <property type="evidence" value="ECO:0007669"/>
    <property type="project" value="UniProtKB-UniRule"/>
</dbReference>
<dbReference type="GO" id="GO:0008270">
    <property type="term" value="F:zinc ion binding"/>
    <property type="evidence" value="ECO:0007669"/>
    <property type="project" value="UniProtKB-UniRule"/>
</dbReference>
<dbReference type="GO" id="GO:0043171">
    <property type="term" value="P:peptide catabolic process"/>
    <property type="evidence" value="ECO:0007669"/>
    <property type="project" value="UniProtKB-UniRule"/>
</dbReference>
<dbReference type="GO" id="GO:0006508">
    <property type="term" value="P:proteolysis"/>
    <property type="evidence" value="ECO:0007669"/>
    <property type="project" value="UniProtKB-UniRule"/>
</dbReference>
<dbReference type="CDD" id="cd03892">
    <property type="entry name" value="M20_peptT"/>
    <property type="match status" value="1"/>
</dbReference>
<dbReference type="FunFam" id="3.30.70.360:FF:000002">
    <property type="entry name" value="Peptidase T"/>
    <property type="match status" value="1"/>
</dbReference>
<dbReference type="Gene3D" id="3.30.70.360">
    <property type="match status" value="1"/>
</dbReference>
<dbReference type="Gene3D" id="3.40.630.10">
    <property type="entry name" value="Zn peptidases"/>
    <property type="match status" value="1"/>
</dbReference>
<dbReference type="HAMAP" id="MF_00550">
    <property type="entry name" value="Aminopeptidase_M20"/>
    <property type="match status" value="1"/>
</dbReference>
<dbReference type="InterPro" id="IPR001261">
    <property type="entry name" value="ArgE/DapE_CS"/>
</dbReference>
<dbReference type="InterPro" id="IPR036264">
    <property type="entry name" value="Bact_exopeptidase_dim_dom"/>
</dbReference>
<dbReference type="InterPro" id="IPR002933">
    <property type="entry name" value="Peptidase_M20"/>
</dbReference>
<dbReference type="InterPro" id="IPR011650">
    <property type="entry name" value="Peptidase_M20_dimer"/>
</dbReference>
<dbReference type="InterPro" id="IPR010161">
    <property type="entry name" value="Peptidase_M20B"/>
</dbReference>
<dbReference type="NCBIfam" id="TIGR01882">
    <property type="entry name" value="peptidase-T"/>
    <property type="match status" value="1"/>
</dbReference>
<dbReference type="NCBIfam" id="NF003976">
    <property type="entry name" value="PRK05469.1"/>
    <property type="match status" value="1"/>
</dbReference>
<dbReference type="NCBIfam" id="NF009920">
    <property type="entry name" value="PRK13381.1"/>
    <property type="match status" value="1"/>
</dbReference>
<dbReference type="PANTHER" id="PTHR42994">
    <property type="entry name" value="PEPTIDASE T"/>
    <property type="match status" value="1"/>
</dbReference>
<dbReference type="PANTHER" id="PTHR42994:SF1">
    <property type="entry name" value="PEPTIDASE T"/>
    <property type="match status" value="1"/>
</dbReference>
<dbReference type="Pfam" id="PF07687">
    <property type="entry name" value="M20_dimer"/>
    <property type="match status" value="1"/>
</dbReference>
<dbReference type="Pfam" id="PF01546">
    <property type="entry name" value="Peptidase_M20"/>
    <property type="match status" value="1"/>
</dbReference>
<dbReference type="PIRSF" id="PIRSF037215">
    <property type="entry name" value="Peptidase_M20B"/>
    <property type="match status" value="1"/>
</dbReference>
<dbReference type="SUPFAM" id="SSF55031">
    <property type="entry name" value="Bacterial exopeptidase dimerisation domain"/>
    <property type="match status" value="1"/>
</dbReference>
<dbReference type="SUPFAM" id="SSF53187">
    <property type="entry name" value="Zn-dependent exopeptidases"/>
    <property type="match status" value="1"/>
</dbReference>
<dbReference type="PROSITE" id="PS00758">
    <property type="entry name" value="ARGE_DAPE_CPG2_1"/>
    <property type="match status" value="1"/>
</dbReference>
<dbReference type="PROSITE" id="PS00759">
    <property type="entry name" value="ARGE_DAPE_CPG2_2"/>
    <property type="match status" value="1"/>
</dbReference>
<evidence type="ECO:0000255" key="1">
    <source>
        <dbReference type="HAMAP-Rule" id="MF_00550"/>
    </source>
</evidence>
<reference key="1">
    <citation type="journal article" date="2009" name="J. Bacteriol.">
        <title>Complete genome sequence and comparative genome analysis of enteropathogenic Escherichia coli O127:H6 strain E2348/69.</title>
        <authorList>
            <person name="Iguchi A."/>
            <person name="Thomson N.R."/>
            <person name="Ogura Y."/>
            <person name="Saunders D."/>
            <person name="Ooka T."/>
            <person name="Henderson I.R."/>
            <person name="Harris D."/>
            <person name="Asadulghani M."/>
            <person name="Kurokawa K."/>
            <person name="Dean P."/>
            <person name="Kenny B."/>
            <person name="Quail M.A."/>
            <person name="Thurston S."/>
            <person name="Dougan G."/>
            <person name="Hayashi T."/>
            <person name="Parkhill J."/>
            <person name="Frankel G."/>
        </authorList>
    </citation>
    <scope>NUCLEOTIDE SEQUENCE [LARGE SCALE GENOMIC DNA]</scope>
    <source>
        <strain>E2348/69 / EPEC</strain>
    </source>
</reference>
<sequence length="408" mass="44909">MDKLLERFLNYVSLDTQSKAGVRQVPSTEGQWKLLHLLKEQLEEMGLINVTLSEKGTLMATLPANVPGDIPAIGFISHVDTSPDCSGKNVNPQIVENYRGGDIALGIGDEVLSPVMFPVLHQLLGQTLITTDGKTLLGADDKAGIAEIMTALAVLQQKNIPHGDIRVAFTPDEEVGKGAKHFDVDAFDARWAYTVDGGGVGELEFENFNAASVNIKIVGNNVHPGTAKGVMVNALSLAARIHAEVPADESPEMTEGYEGFYHLASMKGTVERADMHYIIRDFDRKQFEARKRKMMEIAKKVGKGLHPDCYIELVIEDSYYNMREKVVEHPHILDIAQQAMRDCDIEPELKPIRGGTDGAQLSFMGLPCPNLFTGGYNYHGKHEFVTLEGMEKAVQVIVRIAELTAQRK</sequence>
<name>PEPT_ECO27</name>
<proteinExistence type="inferred from homology"/>
<keyword id="KW-0031">Aminopeptidase</keyword>
<keyword id="KW-0963">Cytoplasm</keyword>
<keyword id="KW-0378">Hydrolase</keyword>
<keyword id="KW-0479">Metal-binding</keyword>
<keyword id="KW-0482">Metalloprotease</keyword>
<keyword id="KW-0645">Protease</keyword>
<keyword id="KW-1185">Reference proteome</keyword>
<keyword id="KW-0862">Zinc</keyword>
<protein>
    <recommendedName>
        <fullName evidence="1">Peptidase T</fullName>
        <ecNumber evidence="1">3.4.11.4</ecNumber>
    </recommendedName>
    <alternativeName>
        <fullName evidence="1">Aminotripeptidase</fullName>
        <shortName evidence="1">Tripeptidase</shortName>
    </alternativeName>
    <alternativeName>
        <fullName evidence="1">Tripeptide aminopeptidase</fullName>
    </alternativeName>
</protein>
<gene>
    <name evidence="1" type="primary">pepT</name>
    <name type="ordered locus">E2348C_1268</name>
</gene>
<comment type="function">
    <text evidence="1">Cleaves the N-terminal amino acid of tripeptides.</text>
</comment>
<comment type="catalytic activity">
    <reaction evidence="1">
        <text>Release of the N-terminal residue from a tripeptide.</text>
        <dbReference type="EC" id="3.4.11.4"/>
    </reaction>
</comment>
<comment type="cofactor">
    <cofactor evidence="1">
        <name>Zn(2+)</name>
        <dbReference type="ChEBI" id="CHEBI:29105"/>
    </cofactor>
    <text evidence="1">Binds 2 Zn(2+) ions per subunit.</text>
</comment>
<comment type="subcellular location">
    <subcellularLocation>
        <location evidence="1">Cytoplasm</location>
    </subcellularLocation>
</comment>
<comment type="similarity">
    <text evidence="1">Belongs to the peptidase M20B family.</text>
</comment>
<accession>B7UQ36</accession>